<feature type="chain" id="PRO_0000448574" description="Palmitoyltransferase ZDHHC19" evidence="2">
    <location>
        <begin position="1"/>
        <end position="347"/>
    </location>
</feature>
<feature type="transmembrane region" description="Helical" evidence="3">
    <location>
        <begin position="29"/>
        <end position="49"/>
    </location>
</feature>
<feature type="transmembrane region" description="Helical" evidence="3">
    <location>
        <begin position="59"/>
        <end position="79"/>
    </location>
</feature>
<feature type="transmembrane region" description="Helical" evidence="3">
    <location>
        <begin position="156"/>
        <end position="176"/>
    </location>
</feature>
<feature type="transmembrane region" description="Helical" evidence="3">
    <location>
        <begin position="194"/>
        <end position="214"/>
    </location>
</feature>
<feature type="domain" description="DHHC" evidence="4">
    <location>
        <begin position="112"/>
        <end position="162"/>
    </location>
</feature>
<feature type="region of interest" description="Disordered" evidence="5">
    <location>
        <begin position="275"/>
        <end position="347"/>
    </location>
</feature>
<feature type="active site" description="S-palmitoyl cysteine intermediate" evidence="2 4">
    <location>
        <position position="142"/>
    </location>
</feature>
<organism>
    <name type="scientific">Mus musculus</name>
    <name type="common">Mouse</name>
    <dbReference type="NCBI Taxonomy" id="10090"/>
    <lineage>
        <taxon>Eukaryota</taxon>
        <taxon>Metazoa</taxon>
        <taxon>Chordata</taxon>
        <taxon>Craniata</taxon>
        <taxon>Vertebrata</taxon>
        <taxon>Euteleostomi</taxon>
        <taxon>Mammalia</taxon>
        <taxon>Eutheria</taxon>
        <taxon>Euarchontoglires</taxon>
        <taxon>Glires</taxon>
        <taxon>Rodentia</taxon>
        <taxon>Myomorpha</taxon>
        <taxon>Muroidea</taxon>
        <taxon>Muridae</taxon>
        <taxon>Murinae</taxon>
        <taxon>Mus</taxon>
        <taxon>Mus</taxon>
    </lineage>
</organism>
<gene>
    <name type="primary">Zdhhc19</name>
    <name type="synonym">Gm616</name>
</gene>
<proteinExistence type="evidence at protein level"/>
<protein>
    <recommendedName>
        <fullName>Palmitoyltransferase ZDHHC19</fullName>
        <ecNumber evidence="2">2.3.1.225</ecNumber>
    </recommendedName>
    <alternativeName>
        <fullName>Zinc finger DHHC domain-containing protein 19</fullName>
        <shortName>DHHC-19</shortName>
    </alternativeName>
</protein>
<sequence length="347" mass="39009">MPFLKDAVTLVKEPQQLPSIPLSWFPSSVFAAFNVTLLLFLSGLFFGFPCRWLVQNGEWAFPAITGPLFILTFFSLVSLNFSDPGILHRGSTKEDPMTVHVVRVNQRAFRLEWCPKCLFHRPPRTYHCPWCNICVEDFDHHCKWVNNCIGHRNFRLFMLLVLSLCLYSGALLVTCLTFLFRTRHLPFSLDKGMAILVAVPAAGFLIPLFLLLLIQALSVSRAESSYESKCRYHPEYNPFDQGFAKNWYLAMFAPLGPNYMSEVVCLQRPVGTAWIQEKTKPSPPRRPKHCRPGPPGPQHQPRRVPGKGPPGSGEAAALQEMRRLPASVEKSPGGPRQPTAEPAAGDP</sequence>
<dbReference type="EC" id="2.3.1.225" evidence="2"/>
<dbReference type="EMBL" id="BC049761">
    <property type="protein sequence ID" value="AAH49761.1"/>
    <property type="molecule type" value="mRNA"/>
</dbReference>
<dbReference type="EMBL" id="AK133398">
    <property type="protein sequence ID" value="BAE21632.1"/>
    <property type="molecule type" value="mRNA"/>
</dbReference>
<dbReference type="EMBL" id="AK132780">
    <property type="protein sequence ID" value="BAE21356.1"/>
    <property type="molecule type" value="mRNA"/>
</dbReference>
<dbReference type="CCDS" id="CCDS28122.1"/>
<dbReference type="RefSeq" id="NP_955013.1">
    <property type="nucleotide sequence ID" value="NM_199309.2"/>
</dbReference>
<dbReference type="SMR" id="Q810M5"/>
<dbReference type="FunCoup" id="Q810M5">
    <property type="interactions" value="99"/>
</dbReference>
<dbReference type="IntAct" id="Q810M5">
    <property type="interactions" value="2"/>
</dbReference>
<dbReference type="STRING" id="10090.ENSMUSP00000070727"/>
<dbReference type="iPTMnet" id="Q810M5"/>
<dbReference type="PhosphoSitePlus" id="Q810M5"/>
<dbReference type="PaxDb" id="10090-ENSMUSP00000070727"/>
<dbReference type="ProteomicsDB" id="302051"/>
<dbReference type="Antibodypedia" id="33933">
    <property type="antibodies" value="56 antibodies from 11 providers"/>
</dbReference>
<dbReference type="DNASU" id="245308"/>
<dbReference type="Ensembl" id="ENSMUST00000064192.8">
    <property type="protein sequence ID" value="ENSMUSP00000070727.8"/>
    <property type="gene ID" value="ENSMUSG00000052363.9"/>
</dbReference>
<dbReference type="GeneID" id="245308"/>
<dbReference type="KEGG" id="mmu:245308"/>
<dbReference type="UCSC" id="uc007yyy.1">
    <property type="organism name" value="mouse"/>
</dbReference>
<dbReference type="AGR" id="MGI:2682948"/>
<dbReference type="CTD" id="131540"/>
<dbReference type="MGI" id="MGI:2682948">
    <property type="gene designation" value="Zdhhc19"/>
</dbReference>
<dbReference type="VEuPathDB" id="HostDB:ENSMUSG00000052363"/>
<dbReference type="eggNOG" id="KOG1311">
    <property type="taxonomic scope" value="Eukaryota"/>
</dbReference>
<dbReference type="GeneTree" id="ENSGT00940000161784"/>
<dbReference type="HOGENOM" id="CLU_018741_4_0_1"/>
<dbReference type="InParanoid" id="Q810M5"/>
<dbReference type="OMA" id="NVCVEDF"/>
<dbReference type="OrthoDB" id="4096362at2759"/>
<dbReference type="PhylomeDB" id="Q810M5"/>
<dbReference type="TreeFam" id="TF354263"/>
<dbReference type="BioGRID-ORCS" id="245308">
    <property type="hits" value="2 hits in 77 CRISPR screens"/>
</dbReference>
<dbReference type="ChiTaRS" id="Zdhhc19">
    <property type="organism name" value="mouse"/>
</dbReference>
<dbReference type="PRO" id="PR:Q810M5"/>
<dbReference type="Proteomes" id="UP000000589">
    <property type="component" value="Chromosome 16"/>
</dbReference>
<dbReference type="RNAct" id="Q810M5">
    <property type="molecule type" value="protein"/>
</dbReference>
<dbReference type="Bgee" id="ENSMUSG00000052363">
    <property type="expression patterns" value="Expressed in seminiferous tubule of testis and 18 other cell types or tissues"/>
</dbReference>
<dbReference type="ExpressionAtlas" id="Q810M5">
    <property type="expression patterns" value="baseline and differential"/>
</dbReference>
<dbReference type="GO" id="GO:0005783">
    <property type="term" value="C:endoplasmic reticulum"/>
    <property type="evidence" value="ECO:0007669"/>
    <property type="project" value="Ensembl"/>
</dbReference>
<dbReference type="GO" id="GO:0000139">
    <property type="term" value="C:Golgi membrane"/>
    <property type="evidence" value="ECO:0007669"/>
    <property type="project" value="UniProtKB-SubCell"/>
</dbReference>
<dbReference type="GO" id="GO:0048471">
    <property type="term" value="C:perinuclear region of cytoplasm"/>
    <property type="evidence" value="ECO:0007669"/>
    <property type="project" value="UniProtKB-SubCell"/>
</dbReference>
<dbReference type="GO" id="GO:0097356">
    <property type="term" value="C:perinucleolar compartment"/>
    <property type="evidence" value="ECO:0007669"/>
    <property type="project" value="Ensembl"/>
</dbReference>
<dbReference type="GO" id="GO:0019706">
    <property type="term" value="F:protein-cysteine S-palmitoyltransferase activity"/>
    <property type="evidence" value="ECO:0000250"/>
    <property type="project" value="UniProtKB"/>
</dbReference>
<dbReference type="GO" id="GO:0018230">
    <property type="term" value="P:peptidyl-L-cysteine S-palmitoylation"/>
    <property type="evidence" value="ECO:0000250"/>
    <property type="project" value="UniProtKB"/>
</dbReference>
<dbReference type="GO" id="GO:1905337">
    <property type="term" value="P:positive regulation of aggrephagy"/>
    <property type="evidence" value="ECO:0007669"/>
    <property type="project" value="Ensembl"/>
</dbReference>
<dbReference type="InterPro" id="IPR001594">
    <property type="entry name" value="Palmitoyltrfase_DHHC"/>
</dbReference>
<dbReference type="InterPro" id="IPR039859">
    <property type="entry name" value="PFA4/ZDH16/20/ERF2-like"/>
</dbReference>
<dbReference type="PANTHER" id="PTHR22883:SF326">
    <property type="entry name" value="PALMITOYLTRANSFERASE ZDHHC19"/>
    <property type="match status" value="1"/>
</dbReference>
<dbReference type="PANTHER" id="PTHR22883">
    <property type="entry name" value="ZINC FINGER DHHC DOMAIN CONTAINING PROTEIN"/>
    <property type="match status" value="1"/>
</dbReference>
<dbReference type="Pfam" id="PF01529">
    <property type="entry name" value="DHHC"/>
    <property type="match status" value="1"/>
</dbReference>
<dbReference type="PROSITE" id="PS50216">
    <property type="entry name" value="DHHC"/>
    <property type="match status" value="1"/>
</dbReference>
<keyword id="KW-0012">Acyltransferase</keyword>
<keyword id="KW-0963">Cytoplasm</keyword>
<keyword id="KW-0903">Direct protein sequencing</keyword>
<keyword id="KW-0333">Golgi apparatus</keyword>
<keyword id="KW-0449">Lipoprotein</keyword>
<keyword id="KW-0472">Membrane</keyword>
<keyword id="KW-0564">Palmitate</keyword>
<keyword id="KW-1185">Reference proteome</keyword>
<keyword id="KW-0808">Transferase</keyword>
<keyword id="KW-0812">Transmembrane</keyword>
<keyword id="KW-1133">Transmembrane helix</keyword>
<comment type="function">
    <text evidence="2">Palmitoyltransferase that mediates palmitoylation oproteins, such as RRAS and SQSTM1. Catalyzes palmitoylation of RRAS, leading to increased cell viability. Acts as a positive regulator of autophagy by mediating palmitoylation of SQSTM1, promoting affinity between SQSTM1 and ATG8 proteins and recruitment of ubiquitinated cargo proteins to autophagosomes.</text>
</comment>
<comment type="catalytic activity">
    <reaction evidence="2">
        <text>L-cysteinyl-[protein] + hexadecanoyl-CoA = S-hexadecanoyl-L-cysteinyl-[protein] + CoA</text>
        <dbReference type="Rhea" id="RHEA:36683"/>
        <dbReference type="Rhea" id="RHEA-COMP:10131"/>
        <dbReference type="Rhea" id="RHEA-COMP:11032"/>
        <dbReference type="ChEBI" id="CHEBI:29950"/>
        <dbReference type="ChEBI" id="CHEBI:57287"/>
        <dbReference type="ChEBI" id="CHEBI:57379"/>
        <dbReference type="ChEBI" id="CHEBI:74151"/>
        <dbReference type="EC" id="2.3.1.225"/>
    </reaction>
    <physiologicalReaction direction="left-to-right" evidence="2">
        <dbReference type="Rhea" id="RHEA:36684"/>
    </physiologicalReaction>
</comment>
<comment type="interaction">
    <interactant intactId="EBI-22225085">
        <id>Q810M5</id>
    </interactant>
    <interactant intactId="EBI-401755">
        <id>P62993</id>
        <label>GRB2</label>
    </interactant>
    <organismsDiffer>true</organismsDiffer>
    <experiments>2</experiments>
</comment>
<comment type="interaction">
    <interactant intactId="EBI-22225085">
        <id>Q810M5</id>
    </interactant>
    <interactant intactId="EBI-518675">
        <id>P40763</id>
        <label>STAT3</label>
    </interactant>
    <organismsDiffer>true</organismsDiffer>
    <experiments>4</experiments>
</comment>
<comment type="subcellular location">
    <subcellularLocation>
        <location evidence="2">Golgi apparatus membrane</location>
        <topology evidence="3">Multi-pass membrane protein</topology>
    </subcellularLocation>
    <subcellularLocation>
        <location evidence="2">Cytoplasm</location>
        <location evidence="2">Perinuclear region</location>
    </subcellularLocation>
</comment>
<comment type="domain">
    <text evidence="1">The DHHC domain is required for palmitoyltransferase activity.</text>
</comment>
<comment type="similarity">
    <text evidence="6">Belongs to the DHHC palmitoyltransferase family.</text>
</comment>
<evidence type="ECO:0000250" key="1">
    <source>
        <dbReference type="UniProtKB" id="Q8IUH5"/>
    </source>
</evidence>
<evidence type="ECO:0000250" key="2">
    <source>
        <dbReference type="UniProtKB" id="Q8WVZ1"/>
    </source>
</evidence>
<evidence type="ECO:0000255" key="3"/>
<evidence type="ECO:0000255" key="4">
    <source>
        <dbReference type="PROSITE-ProRule" id="PRU00067"/>
    </source>
</evidence>
<evidence type="ECO:0000256" key="5">
    <source>
        <dbReference type="SAM" id="MobiDB-lite"/>
    </source>
</evidence>
<evidence type="ECO:0000305" key="6"/>
<reference key="1">
    <citation type="journal article" date="2004" name="Genome Res.">
        <title>The status, quality, and expansion of the NIH full-length cDNA project: the Mammalian Gene Collection (MGC).</title>
        <authorList>
            <consortium name="The MGC Project Team"/>
        </authorList>
    </citation>
    <scope>NUCLEOTIDE SEQUENCE [LARGE SCALE MRNA]</scope>
    <source>
        <tissue>Testis</tissue>
    </source>
</reference>
<reference key="2">
    <citation type="journal article" date="2005" name="Science">
        <title>The transcriptional landscape of the mammalian genome.</title>
        <authorList>
            <person name="Carninci P."/>
            <person name="Kasukawa T."/>
            <person name="Katayama S."/>
            <person name="Gough J."/>
            <person name="Frith M.C."/>
            <person name="Maeda N."/>
            <person name="Oyama R."/>
            <person name="Ravasi T."/>
            <person name="Lenhard B."/>
            <person name="Wells C."/>
            <person name="Kodzius R."/>
            <person name="Shimokawa K."/>
            <person name="Bajic V.B."/>
            <person name="Brenner S.E."/>
            <person name="Batalov S."/>
            <person name="Forrest A.R."/>
            <person name="Zavolan M."/>
            <person name="Davis M.J."/>
            <person name="Wilming L.G."/>
            <person name="Aidinis V."/>
            <person name="Allen J.E."/>
            <person name="Ambesi-Impiombato A."/>
            <person name="Apweiler R."/>
            <person name="Aturaliya R.N."/>
            <person name="Bailey T.L."/>
            <person name="Bansal M."/>
            <person name="Baxter L."/>
            <person name="Beisel K.W."/>
            <person name="Bersano T."/>
            <person name="Bono H."/>
            <person name="Chalk A.M."/>
            <person name="Chiu K.P."/>
            <person name="Choudhary V."/>
            <person name="Christoffels A."/>
            <person name="Clutterbuck D.R."/>
            <person name="Crowe M.L."/>
            <person name="Dalla E."/>
            <person name="Dalrymple B.P."/>
            <person name="de Bono B."/>
            <person name="Della Gatta G."/>
            <person name="di Bernardo D."/>
            <person name="Down T."/>
            <person name="Engstrom P."/>
            <person name="Fagiolini M."/>
            <person name="Faulkner G."/>
            <person name="Fletcher C.F."/>
            <person name="Fukushima T."/>
            <person name="Furuno M."/>
            <person name="Futaki S."/>
            <person name="Gariboldi M."/>
            <person name="Georgii-Hemming P."/>
            <person name="Gingeras T.R."/>
            <person name="Gojobori T."/>
            <person name="Green R.E."/>
            <person name="Gustincich S."/>
            <person name="Harbers M."/>
            <person name="Hayashi Y."/>
            <person name="Hensch T.K."/>
            <person name="Hirokawa N."/>
            <person name="Hill D."/>
            <person name="Huminiecki L."/>
            <person name="Iacono M."/>
            <person name="Ikeo K."/>
            <person name="Iwama A."/>
            <person name="Ishikawa T."/>
            <person name="Jakt M."/>
            <person name="Kanapin A."/>
            <person name="Katoh M."/>
            <person name="Kawasawa Y."/>
            <person name="Kelso J."/>
            <person name="Kitamura H."/>
            <person name="Kitano H."/>
            <person name="Kollias G."/>
            <person name="Krishnan S.P."/>
            <person name="Kruger A."/>
            <person name="Kummerfeld S.K."/>
            <person name="Kurochkin I.V."/>
            <person name="Lareau L.F."/>
            <person name="Lazarevic D."/>
            <person name="Lipovich L."/>
            <person name="Liu J."/>
            <person name="Liuni S."/>
            <person name="McWilliam S."/>
            <person name="Madan Babu M."/>
            <person name="Madera M."/>
            <person name="Marchionni L."/>
            <person name="Matsuda H."/>
            <person name="Matsuzawa S."/>
            <person name="Miki H."/>
            <person name="Mignone F."/>
            <person name="Miyake S."/>
            <person name="Morris K."/>
            <person name="Mottagui-Tabar S."/>
            <person name="Mulder N."/>
            <person name="Nakano N."/>
            <person name="Nakauchi H."/>
            <person name="Ng P."/>
            <person name="Nilsson R."/>
            <person name="Nishiguchi S."/>
            <person name="Nishikawa S."/>
            <person name="Nori F."/>
            <person name="Ohara O."/>
            <person name="Okazaki Y."/>
            <person name="Orlando V."/>
            <person name="Pang K.C."/>
            <person name="Pavan W.J."/>
            <person name="Pavesi G."/>
            <person name="Pesole G."/>
            <person name="Petrovsky N."/>
            <person name="Piazza S."/>
            <person name="Reed J."/>
            <person name="Reid J.F."/>
            <person name="Ring B.Z."/>
            <person name="Ringwald M."/>
            <person name="Rost B."/>
            <person name="Ruan Y."/>
            <person name="Salzberg S.L."/>
            <person name="Sandelin A."/>
            <person name="Schneider C."/>
            <person name="Schoenbach C."/>
            <person name="Sekiguchi K."/>
            <person name="Semple C.A."/>
            <person name="Seno S."/>
            <person name="Sessa L."/>
            <person name="Sheng Y."/>
            <person name="Shibata Y."/>
            <person name="Shimada H."/>
            <person name="Shimada K."/>
            <person name="Silva D."/>
            <person name="Sinclair B."/>
            <person name="Sperling S."/>
            <person name="Stupka E."/>
            <person name="Sugiura K."/>
            <person name="Sultana R."/>
            <person name="Takenaka Y."/>
            <person name="Taki K."/>
            <person name="Tammoja K."/>
            <person name="Tan S.L."/>
            <person name="Tang S."/>
            <person name="Taylor M.S."/>
            <person name="Tegner J."/>
            <person name="Teichmann S.A."/>
            <person name="Ueda H.R."/>
            <person name="van Nimwegen E."/>
            <person name="Verardo R."/>
            <person name="Wei C.L."/>
            <person name="Yagi K."/>
            <person name="Yamanishi H."/>
            <person name="Zabarovsky E."/>
            <person name="Zhu S."/>
            <person name="Zimmer A."/>
            <person name="Hide W."/>
            <person name="Bult C."/>
            <person name="Grimmond S.M."/>
            <person name="Teasdale R.D."/>
            <person name="Liu E.T."/>
            <person name="Brusic V."/>
            <person name="Quackenbush J."/>
            <person name="Wahlestedt C."/>
            <person name="Mattick J.S."/>
            <person name="Hume D.A."/>
            <person name="Kai C."/>
            <person name="Sasaki D."/>
            <person name="Tomaru Y."/>
            <person name="Fukuda S."/>
            <person name="Kanamori-Katayama M."/>
            <person name="Suzuki M."/>
            <person name="Aoki J."/>
            <person name="Arakawa T."/>
            <person name="Iida J."/>
            <person name="Imamura K."/>
            <person name="Itoh M."/>
            <person name="Kato T."/>
            <person name="Kawaji H."/>
            <person name="Kawagashira N."/>
            <person name="Kawashima T."/>
            <person name="Kojima M."/>
            <person name="Kondo S."/>
            <person name="Konno H."/>
            <person name="Nakano K."/>
            <person name="Ninomiya N."/>
            <person name="Nishio T."/>
            <person name="Okada M."/>
            <person name="Plessy C."/>
            <person name="Shibata K."/>
            <person name="Shiraki T."/>
            <person name="Suzuki S."/>
            <person name="Tagami M."/>
            <person name="Waki K."/>
            <person name="Watahiki A."/>
            <person name="Okamura-Oho Y."/>
            <person name="Suzuki H."/>
            <person name="Kawai J."/>
            <person name="Hayashizaki Y."/>
        </authorList>
    </citation>
    <scope>NUCLEOTIDE SEQUENCE [LARGE SCALE MRNA]</scope>
    <source>
        <strain>C57BL/6J</strain>
        <tissue>Testis</tissue>
    </source>
</reference>
<reference key="3">
    <citation type="submission" date="2009-01" db="UniProtKB">
        <authorList>
            <person name="Lubec G."/>
            <person name="Sunyer B."/>
            <person name="Chen W.-Q."/>
        </authorList>
    </citation>
    <scope>PROTEIN SEQUENCE OF 222-229</scope>
    <scope>IDENTIFICATION BY MASS SPECTROMETRY</scope>
    <source>
        <strain>OF1</strain>
        <tissue>Hippocampus</tissue>
    </source>
</reference>
<accession>Q810M5</accession>
<name>ZDH19_MOUSE</name>